<name>CWP13_ARATH</name>
<proteinExistence type="evidence at protein level"/>
<protein>
    <recommendedName>
        <fullName>44 kDa cell wall protein</fullName>
    </recommendedName>
</protein>
<reference evidence="3" key="1">
    <citation type="journal article" date="1997" name="J. Biol. Chem.">
        <title>Differential extraction and protein sequencing reveals major differences in patterns of primary cell wall proteins from plants.</title>
        <authorList>
            <person name="Robertson D."/>
            <person name="Mitchell G.P."/>
            <person name="Gilroy J.S."/>
            <person name="Gerrish C."/>
            <person name="Bolwell G.P."/>
            <person name="Slabas A.R."/>
        </authorList>
    </citation>
    <scope>PROTEIN SEQUENCE</scope>
    <scope>SUBCELLULAR LOCATION</scope>
    <source>
        <strain>cv. Landsberg erecta</strain>
    </source>
</reference>
<sequence length="10" mass="1214">HLKYKDPEQG</sequence>
<comment type="subcellular location">
    <subcellularLocation>
        <location evidence="1">Secreted</location>
        <location evidence="1">Cell wall</location>
    </subcellularLocation>
</comment>
<dbReference type="GO" id="GO:0005576">
    <property type="term" value="C:extracellular region"/>
    <property type="evidence" value="ECO:0007669"/>
    <property type="project" value="UniProtKB-KW"/>
</dbReference>
<organism>
    <name type="scientific">Arabidopsis thaliana</name>
    <name type="common">Mouse-ear cress</name>
    <dbReference type="NCBI Taxonomy" id="3702"/>
    <lineage>
        <taxon>Eukaryota</taxon>
        <taxon>Viridiplantae</taxon>
        <taxon>Streptophyta</taxon>
        <taxon>Embryophyta</taxon>
        <taxon>Tracheophyta</taxon>
        <taxon>Spermatophyta</taxon>
        <taxon>Magnoliopsida</taxon>
        <taxon>eudicotyledons</taxon>
        <taxon>Gunneridae</taxon>
        <taxon>Pentapetalae</taxon>
        <taxon>rosids</taxon>
        <taxon>malvids</taxon>
        <taxon>Brassicales</taxon>
        <taxon>Brassicaceae</taxon>
        <taxon>Camelineae</taxon>
        <taxon>Arabidopsis</taxon>
    </lineage>
</organism>
<accession>P80835</accession>
<feature type="chain" id="PRO_0000079669" description="44 kDa cell wall protein">
    <location>
        <begin position="1"/>
        <end position="10" status="greater than"/>
    </location>
</feature>
<feature type="non-terminal residue" evidence="2">
    <location>
        <position position="10"/>
    </location>
</feature>
<keyword id="KW-0134">Cell wall</keyword>
<keyword id="KW-0903">Direct protein sequencing</keyword>
<keyword id="KW-0964">Secreted</keyword>
<evidence type="ECO:0000269" key="1">
    <source>
    </source>
</evidence>
<evidence type="ECO:0000303" key="2">
    <source>
    </source>
</evidence>
<evidence type="ECO:0000305" key="3"/>